<reference key="1">
    <citation type="submission" date="2007-03" db="EMBL/GenBank/DDBJ databases">
        <title>Complete sequence of Prosthecochloris vibrioformis DSM 265.</title>
        <authorList>
            <consortium name="US DOE Joint Genome Institute"/>
            <person name="Copeland A."/>
            <person name="Lucas S."/>
            <person name="Lapidus A."/>
            <person name="Barry K."/>
            <person name="Detter J.C."/>
            <person name="Glavina del Rio T."/>
            <person name="Hammon N."/>
            <person name="Israni S."/>
            <person name="Pitluck S."/>
            <person name="Schmutz J."/>
            <person name="Larimer F."/>
            <person name="Land M."/>
            <person name="Hauser L."/>
            <person name="Mikhailova N."/>
            <person name="Li T."/>
            <person name="Overmann J."/>
            <person name="Schuster S.C."/>
            <person name="Bryant D.A."/>
            <person name="Richardson P."/>
        </authorList>
    </citation>
    <scope>NUCLEOTIDE SEQUENCE [LARGE SCALE GENOMIC DNA]</scope>
    <source>
        <strain>DSM 265 / 1930</strain>
    </source>
</reference>
<proteinExistence type="inferred from homology"/>
<comment type="function">
    <text evidence="1">Responsible for synthesis of pseudouridine from uracil-55 in the psi GC loop of transfer RNAs.</text>
</comment>
<comment type="catalytic activity">
    <reaction evidence="1">
        <text>uridine(55) in tRNA = pseudouridine(55) in tRNA</text>
        <dbReference type="Rhea" id="RHEA:42532"/>
        <dbReference type="Rhea" id="RHEA-COMP:10101"/>
        <dbReference type="Rhea" id="RHEA-COMP:10102"/>
        <dbReference type="ChEBI" id="CHEBI:65314"/>
        <dbReference type="ChEBI" id="CHEBI:65315"/>
        <dbReference type="EC" id="5.4.99.25"/>
    </reaction>
</comment>
<comment type="similarity">
    <text evidence="1">Belongs to the pseudouridine synthase TruB family. Type 1 subfamily.</text>
</comment>
<accession>A4SGG0</accession>
<evidence type="ECO:0000255" key="1">
    <source>
        <dbReference type="HAMAP-Rule" id="MF_01080"/>
    </source>
</evidence>
<name>TRUB_CHLPM</name>
<protein>
    <recommendedName>
        <fullName evidence="1">tRNA pseudouridine synthase B</fullName>
        <ecNumber evidence="1">5.4.99.25</ecNumber>
    </recommendedName>
    <alternativeName>
        <fullName evidence="1">tRNA pseudouridine(55) synthase</fullName>
        <shortName evidence="1">Psi55 synthase</shortName>
    </alternativeName>
    <alternativeName>
        <fullName evidence="1">tRNA pseudouridylate synthase</fullName>
    </alternativeName>
    <alternativeName>
        <fullName evidence="1">tRNA-uridine isomerase</fullName>
    </alternativeName>
</protein>
<gene>
    <name evidence="1" type="primary">truB</name>
    <name type="ordered locus">Cvib_1559</name>
</gene>
<organism>
    <name type="scientific">Chlorobium phaeovibrioides (strain DSM 265 / 1930)</name>
    <name type="common">Prosthecochloris vibrioformis (strain DSM 265)</name>
    <dbReference type="NCBI Taxonomy" id="290318"/>
    <lineage>
        <taxon>Bacteria</taxon>
        <taxon>Pseudomonadati</taxon>
        <taxon>Chlorobiota</taxon>
        <taxon>Chlorobiia</taxon>
        <taxon>Chlorobiales</taxon>
        <taxon>Chlorobiaceae</taxon>
        <taxon>Chlorobium/Pelodictyon group</taxon>
        <taxon>Chlorobium</taxon>
    </lineage>
</organism>
<feature type="chain" id="PRO_1000084642" description="tRNA pseudouridine synthase B">
    <location>
        <begin position="1"/>
        <end position="240"/>
    </location>
</feature>
<feature type="active site" description="Nucleophile" evidence="1">
    <location>
        <position position="54"/>
    </location>
</feature>
<dbReference type="EC" id="5.4.99.25" evidence="1"/>
<dbReference type="EMBL" id="CP000607">
    <property type="protein sequence ID" value="ABP37569.1"/>
    <property type="molecule type" value="Genomic_DNA"/>
</dbReference>
<dbReference type="SMR" id="A4SGG0"/>
<dbReference type="STRING" id="290318.Cvib_1559"/>
<dbReference type="KEGG" id="pvi:Cvib_1559"/>
<dbReference type="eggNOG" id="COG0130">
    <property type="taxonomic scope" value="Bacteria"/>
</dbReference>
<dbReference type="HOGENOM" id="CLU_032087_2_0_10"/>
<dbReference type="OrthoDB" id="9802309at2"/>
<dbReference type="GO" id="GO:0003723">
    <property type="term" value="F:RNA binding"/>
    <property type="evidence" value="ECO:0007669"/>
    <property type="project" value="InterPro"/>
</dbReference>
<dbReference type="GO" id="GO:0160148">
    <property type="term" value="F:tRNA pseudouridine(55) synthase activity"/>
    <property type="evidence" value="ECO:0007669"/>
    <property type="project" value="UniProtKB-EC"/>
</dbReference>
<dbReference type="GO" id="GO:1990481">
    <property type="term" value="P:mRNA pseudouridine synthesis"/>
    <property type="evidence" value="ECO:0007669"/>
    <property type="project" value="TreeGrafter"/>
</dbReference>
<dbReference type="GO" id="GO:0031119">
    <property type="term" value="P:tRNA pseudouridine synthesis"/>
    <property type="evidence" value="ECO:0007669"/>
    <property type="project" value="UniProtKB-UniRule"/>
</dbReference>
<dbReference type="Gene3D" id="3.30.2350.10">
    <property type="entry name" value="Pseudouridine synthase"/>
    <property type="match status" value="1"/>
</dbReference>
<dbReference type="HAMAP" id="MF_01080">
    <property type="entry name" value="TruB_bact"/>
    <property type="match status" value="1"/>
</dbReference>
<dbReference type="InterPro" id="IPR020103">
    <property type="entry name" value="PsdUridine_synth_cat_dom_sf"/>
</dbReference>
<dbReference type="InterPro" id="IPR002501">
    <property type="entry name" value="PsdUridine_synth_N"/>
</dbReference>
<dbReference type="InterPro" id="IPR014780">
    <property type="entry name" value="tRNA_psdUridine_synth_TruB"/>
</dbReference>
<dbReference type="NCBIfam" id="TIGR00431">
    <property type="entry name" value="TruB"/>
    <property type="match status" value="1"/>
</dbReference>
<dbReference type="PANTHER" id="PTHR13767:SF2">
    <property type="entry name" value="PSEUDOURIDYLATE SYNTHASE TRUB1"/>
    <property type="match status" value="1"/>
</dbReference>
<dbReference type="PANTHER" id="PTHR13767">
    <property type="entry name" value="TRNA-PSEUDOURIDINE SYNTHASE"/>
    <property type="match status" value="1"/>
</dbReference>
<dbReference type="Pfam" id="PF01509">
    <property type="entry name" value="TruB_N"/>
    <property type="match status" value="1"/>
</dbReference>
<dbReference type="SUPFAM" id="SSF55120">
    <property type="entry name" value="Pseudouridine synthase"/>
    <property type="match status" value="1"/>
</dbReference>
<sequence>MVEMHEGAGLPEDGEFLLLDKPLDWTSFDVVAKVRNAYKRGGLKRKVGHSGTLDPKATGLLILATGKKTRELSTLEGLDKVYDAVIRLGARTLSHDSESEEYGLRDVTHLDEGAVKRAASELEGKRMQQAPMHSATWHKGKRLYELARKGTVVTDRKSKEIVVHSFDVLRVELPLAYCRIHVSKGAYIRVLADELGEALGVGGYLAGLRRIAIGSYQVESAMRVEDAVARVLGQMQVTDQ</sequence>
<keyword id="KW-0413">Isomerase</keyword>
<keyword id="KW-0819">tRNA processing</keyword>